<reference key="1">
    <citation type="submission" date="2006-04" db="EMBL/GenBank/DDBJ databases">
        <title>Complete genome sequencing and analysis of selected influenza virus vaccine strains spanning six decades (1933-1999).</title>
        <authorList>
            <person name="Mbawuike I.N."/>
            <person name="Zhang Y."/>
            <person name="Yamada R.E."/>
            <person name="Nino D."/>
            <person name="Bui H.-H."/>
            <person name="Sette A."/>
            <person name="Couch R.B."/>
        </authorList>
    </citation>
    <scope>NUCLEOTIDE SEQUENCE [GENOMIC RNA]</scope>
</reference>
<reference key="2">
    <citation type="journal article" date="2004" name="Virus Res.">
        <title>Assembly and budding of influenza virus.</title>
        <authorList>
            <person name="Nayak D.P."/>
            <person name="Hui E.K."/>
            <person name="Barman S."/>
        </authorList>
    </citation>
    <scope>REVIEW</scope>
</reference>
<reference key="3">
    <citation type="journal article" date="2005" name="N. Engl. J. Med.">
        <title>Neuraminidase inhibitors for influenza.</title>
        <authorList>
            <person name="Moscona A."/>
        </authorList>
    </citation>
    <scope>REVIEW</scope>
</reference>
<reference key="4">
    <citation type="journal article" date="2005" name="Biol. Pharm. Bull.">
        <title>Sialobiology of influenza: molecular mechanism of host range variation of influenza viruses.</title>
        <authorList>
            <person name="Suzuki Y."/>
        </authorList>
    </citation>
    <scope>REVIEW</scope>
</reference>
<dbReference type="EC" id="3.2.1.18" evidence="1"/>
<dbReference type="EMBL" id="DQ508931">
    <property type="protein sequence ID" value="ABF21339.1"/>
    <property type="molecule type" value="Genomic_RNA"/>
</dbReference>
<dbReference type="SMR" id="P0DOF6"/>
<dbReference type="BindingDB" id="P0DOF6"/>
<dbReference type="GlyCosmos" id="P0DOF6">
    <property type="glycosylation" value="7 sites, No reported glycans"/>
</dbReference>
<dbReference type="PRO" id="PR:P0DOF6"/>
<dbReference type="Proteomes" id="UP000153055">
    <property type="component" value="Genome"/>
</dbReference>
<dbReference type="GO" id="GO:0020002">
    <property type="term" value="C:host cell plasma membrane"/>
    <property type="evidence" value="ECO:0007669"/>
    <property type="project" value="UniProtKB-SubCell"/>
</dbReference>
<dbReference type="GO" id="GO:0016020">
    <property type="term" value="C:membrane"/>
    <property type="evidence" value="ECO:0007669"/>
    <property type="project" value="UniProtKB-UniRule"/>
</dbReference>
<dbReference type="GO" id="GO:0055036">
    <property type="term" value="C:virion membrane"/>
    <property type="evidence" value="ECO:0007669"/>
    <property type="project" value="UniProtKB-SubCell"/>
</dbReference>
<dbReference type="GO" id="GO:0004308">
    <property type="term" value="F:exo-alpha-sialidase activity"/>
    <property type="evidence" value="ECO:0007669"/>
    <property type="project" value="UniProtKB-UniRule"/>
</dbReference>
<dbReference type="GO" id="GO:0046872">
    <property type="term" value="F:metal ion binding"/>
    <property type="evidence" value="ECO:0007669"/>
    <property type="project" value="UniProtKB-UniRule"/>
</dbReference>
<dbReference type="GO" id="GO:0005975">
    <property type="term" value="P:carbohydrate metabolic process"/>
    <property type="evidence" value="ECO:0007669"/>
    <property type="project" value="InterPro"/>
</dbReference>
<dbReference type="GO" id="GO:0046761">
    <property type="term" value="P:viral budding from plasma membrane"/>
    <property type="evidence" value="ECO:0007669"/>
    <property type="project" value="UniProtKB-UniRule"/>
</dbReference>
<dbReference type="CDD" id="cd15483">
    <property type="entry name" value="Influenza_NA"/>
    <property type="match status" value="1"/>
</dbReference>
<dbReference type="Gene3D" id="2.120.10.10">
    <property type="match status" value="1"/>
</dbReference>
<dbReference type="HAMAP" id="MF_04071">
    <property type="entry name" value="INFV_NRAM"/>
    <property type="match status" value="1"/>
</dbReference>
<dbReference type="InterPro" id="IPR001860">
    <property type="entry name" value="Glyco_hydro_34"/>
</dbReference>
<dbReference type="InterPro" id="IPR033654">
    <property type="entry name" value="Sialidase_Influenza_A/B"/>
</dbReference>
<dbReference type="InterPro" id="IPR036278">
    <property type="entry name" value="Sialidase_sf"/>
</dbReference>
<dbReference type="Pfam" id="PF00064">
    <property type="entry name" value="Neur"/>
    <property type="match status" value="1"/>
</dbReference>
<dbReference type="SUPFAM" id="SSF50939">
    <property type="entry name" value="Sialidases"/>
    <property type="match status" value="1"/>
</dbReference>
<sequence length="469" mass="52146">MNPNQKIITIGSVSLTIATICFLMQIAILVTTVTLHFKQYECDSPANNQVMPCEPIIIERNITEIVYLTNTTIEKEICPKLVEYRNWSKPQCKITGFAPFSKDNSIRLSAGGDIWVTREPYVSCDPGKCYQFALGQGTTLDNKHSNDTIHDRTPHRTLLMNELGVPFHLGTRQVCIAWSSSSCHDGKAWLHVCVTGYDKNATASFIYDGRLVDSIGSWSQNILRTQESECVCINGTCTVVMTDGSASGRADTKILFIEEGKIVHISPLSGSAQHVEECSCYPRYPGVRCICRDNWKGSNRPVVDINVKDYSIDSSYVCSGLVGDTPRNNDRSSNSYCRNPNNEKGNHGVKGWAFDDGNDVWMGRTISEDSRSGYETFKVIGGWSTPNSKLQINRQVIVDSDNRSGYSGIFSVEGKSCINRCFYVELIRGREQETRVWWTSNSIVVFCGTSGTYGTGSWPDGADINLMPI</sequence>
<feature type="chain" id="PRO_0000439957" description="Neuraminidase">
    <location>
        <begin position="1"/>
        <end position="469"/>
    </location>
</feature>
<feature type="topological domain" description="Intravirion" evidence="1">
    <location>
        <begin position="1"/>
        <end position="9"/>
    </location>
</feature>
<feature type="transmembrane region" description="Helical" evidence="1">
    <location>
        <begin position="10"/>
        <end position="30"/>
    </location>
</feature>
<feature type="topological domain" description="Virion surface" evidence="1">
    <location>
        <begin position="31"/>
        <end position="469"/>
    </location>
</feature>
<feature type="region of interest" description="Involved in apical transport and lipid raft association" evidence="1">
    <location>
        <begin position="11"/>
        <end position="33"/>
    </location>
</feature>
<feature type="region of interest" description="Hypervariable stalk region" evidence="1">
    <location>
        <begin position="36"/>
        <end position="88"/>
    </location>
</feature>
<feature type="region of interest" description="Head of neuraminidase" evidence="1">
    <location>
        <begin position="91"/>
        <end position="469"/>
    </location>
</feature>
<feature type="active site" description="Proton donor/acceptor" evidence="1">
    <location>
        <position position="151"/>
    </location>
</feature>
<feature type="active site" description="Nucleophile" evidence="1">
    <location>
        <position position="406"/>
    </location>
</feature>
<feature type="binding site" evidence="1">
    <location>
        <position position="118"/>
    </location>
    <ligand>
        <name>substrate</name>
    </ligand>
</feature>
<feature type="binding site" evidence="1">
    <location>
        <position position="152"/>
    </location>
    <ligand>
        <name>substrate</name>
    </ligand>
</feature>
<feature type="binding site" evidence="1">
    <location>
        <begin position="276"/>
        <end position="277"/>
    </location>
    <ligand>
        <name>substrate</name>
    </ligand>
</feature>
<feature type="binding site" evidence="1">
    <location>
        <position position="292"/>
    </location>
    <ligand>
        <name>substrate</name>
    </ligand>
</feature>
<feature type="binding site" evidence="1">
    <location>
        <position position="293"/>
    </location>
    <ligand>
        <name>Ca(2+)</name>
        <dbReference type="ChEBI" id="CHEBI:29108"/>
    </ligand>
</feature>
<feature type="binding site" evidence="1">
    <location>
        <position position="297"/>
    </location>
    <ligand>
        <name>Ca(2+)</name>
        <dbReference type="ChEBI" id="CHEBI:29108"/>
    </ligand>
</feature>
<feature type="binding site" evidence="1">
    <location>
        <position position="324"/>
    </location>
    <ligand>
        <name>Ca(2+)</name>
        <dbReference type="ChEBI" id="CHEBI:29108"/>
    </ligand>
</feature>
<feature type="binding site" evidence="1">
    <location>
        <position position="371"/>
    </location>
    <ligand>
        <name>substrate</name>
    </ligand>
</feature>
<feature type="glycosylation site" description="N-linked (GlcNAc...) asparagine; by host" evidence="1">
    <location>
        <position position="61"/>
    </location>
</feature>
<feature type="glycosylation site" description="N-linked (GlcNAc...) asparagine; by host" evidence="1">
    <location>
        <position position="70"/>
    </location>
</feature>
<feature type="glycosylation site" description="N-linked (GlcNAc...) asparagine; by host" evidence="1">
    <location>
        <position position="86"/>
    </location>
</feature>
<feature type="glycosylation site" description="N-linked (GlcNAc...) asparagine; by host" evidence="1">
    <location>
        <position position="146"/>
    </location>
</feature>
<feature type="glycosylation site" description="N-linked (GlcNAc...) asparagine; by host" evidence="1">
    <location>
        <position position="200"/>
    </location>
</feature>
<feature type="glycosylation site" description="N-linked (GlcNAc...) asparagine; by host" evidence="1">
    <location>
        <position position="234"/>
    </location>
</feature>
<feature type="glycosylation site" description="N-linked (GlcNAc...) asparagine; by host" evidence="1">
    <location>
        <position position="402"/>
    </location>
</feature>
<feature type="disulfide bond" evidence="1">
    <location>
        <begin position="92"/>
        <end position="417"/>
    </location>
</feature>
<feature type="disulfide bond" evidence="1">
    <location>
        <begin position="124"/>
        <end position="129"/>
    </location>
</feature>
<feature type="disulfide bond" evidence="1">
    <location>
        <begin position="183"/>
        <end position="230"/>
    </location>
</feature>
<feature type="disulfide bond" evidence="1">
    <location>
        <begin position="232"/>
        <end position="237"/>
    </location>
</feature>
<feature type="disulfide bond" evidence="1">
    <location>
        <begin position="278"/>
        <end position="291"/>
    </location>
</feature>
<feature type="disulfide bond" evidence="1">
    <location>
        <begin position="280"/>
        <end position="289"/>
    </location>
</feature>
<feature type="disulfide bond" evidence="1">
    <location>
        <begin position="318"/>
        <end position="337"/>
    </location>
</feature>
<feature type="disulfide bond" evidence="1">
    <location>
        <begin position="421"/>
        <end position="447"/>
    </location>
</feature>
<protein>
    <recommendedName>
        <fullName evidence="1">Neuraminidase</fullName>
        <ecNumber evidence="1">3.2.1.18</ecNumber>
    </recommendedName>
</protein>
<keyword id="KW-0106">Calcium</keyword>
<keyword id="KW-1015">Disulfide bond</keyword>
<keyword id="KW-0325">Glycoprotein</keyword>
<keyword id="KW-0326">Glycosidase</keyword>
<keyword id="KW-1032">Host cell membrane</keyword>
<keyword id="KW-1043">Host membrane</keyword>
<keyword id="KW-0378">Hydrolase</keyword>
<keyword id="KW-0472">Membrane</keyword>
<keyword id="KW-0479">Metal-binding</keyword>
<keyword id="KW-0735">Signal-anchor</keyword>
<keyword id="KW-0812">Transmembrane</keyword>
<keyword id="KW-1133">Transmembrane helix</keyword>
<keyword id="KW-0946">Virion</keyword>
<gene>
    <name evidence="1" type="primary">NA</name>
</gene>
<organism>
    <name type="scientific">Influenza A virus (strain A/Udorn/307/1972 H3N2)</name>
    <dbReference type="NCBI Taxonomy" id="381517"/>
    <lineage>
        <taxon>Viruses</taxon>
        <taxon>Riboviria</taxon>
        <taxon>Orthornavirae</taxon>
        <taxon>Negarnaviricota</taxon>
        <taxon>Polyploviricotina</taxon>
        <taxon>Insthoviricetes</taxon>
        <taxon>Articulavirales</taxon>
        <taxon>Orthomyxoviridae</taxon>
        <taxon>Alphainfluenzavirus</taxon>
        <taxon>Alphainfluenzavirus influenzae</taxon>
        <taxon>Influenza A virus</taxon>
    </lineage>
</organism>
<name>NRAM_I72A2</name>
<evidence type="ECO:0000255" key="1">
    <source>
        <dbReference type="HAMAP-Rule" id="MF_04071"/>
    </source>
</evidence>
<organismHost>
    <name type="scientific">Aves</name>
    <dbReference type="NCBI Taxonomy" id="8782"/>
</organismHost>
<organismHost>
    <name type="scientific">Cetacea</name>
    <name type="common">whales</name>
    <dbReference type="NCBI Taxonomy" id="9721"/>
</organismHost>
<organismHost>
    <name type="scientific">Homo sapiens</name>
    <name type="common">Human</name>
    <dbReference type="NCBI Taxonomy" id="9606"/>
</organismHost>
<organismHost>
    <name type="scientific">Phocidae</name>
    <name type="common">true seals</name>
    <dbReference type="NCBI Taxonomy" id="9709"/>
</organismHost>
<organismHost>
    <name type="scientific">Sus scrofa</name>
    <name type="common">Pig</name>
    <dbReference type="NCBI Taxonomy" id="9823"/>
</organismHost>
<comment type="function">
    <text evidence="1">Catalyzes the removal of terminal sialic acid residues from viral and cellular glycoconjugates. Cleaves off the terminal sialic acids on the glycosylated HA during virus budding to facilitate virus release. Additionally helps virus spread through the circulation by further removing sialic acids from the cell surface. These cleavages prevent self-aggregation and ensure the efficient spread of the progeny virus from cell to cell. Otherwise, infection would be limited to one round of replication. Described as a receptor-destroying enzyme because it cleaves a terminal sialic acid from the cellular receptors. May facilitate viral invasion of the upper airways by cleaving the sialic acid moieties on the mucin of the airway epithelial cells. Likely to plays a role in the budding process through its association with lipid rafts during intracellular transport. May additionally display a raft-association independent effect on budding. Plays a role in the determination of host range restriction on replication and virulence. Sialidase activity in late endosome/lysosome traffic seems to enhance virus replication.</text>
</comment>
<comment type="catalytic activity">
    <reaction evidence="1">
        <text>Hydrolysis of alpha-(2-&gt;3)-, alpha-(2-&gt;6)-, alpha-(2-&gt;8)- glycosidic linkages of terminal sialic acid residues in oligosaccharides, glycoproteins, glycolipids, colominic acid and synthetic substrates.</text>
        <dbReference type="EC" id="3.2.1.18"/>
    </reaction>
</comment>
<comment type="cofactor">
    <cofactor evidence="1">
        <name>Ca(2+)</name>
        <dbReference type="ChEBI" id="CHEBI:29108"/>
    </cofactor>
</comment>
<comment type="activity regulation">
    <text evidence="1">Inhibited by the neuraminidase inhibitors zanamivir (Relenza) and oseltamivir (Tamiflu). These drugs interfere with the release of progeny virus from infected cells and are effective against all influenza strains. Resistance to neuraminidase inhibitors is quite rare.</text>
</comment>
<comment type="subunit">
    <text evidence="1">Homotetramer.</text>
</comment>
<comment type="subcellular location">
    <subcellularLocation>
        <location evidence="1">Virion membrane</location>
    </subcellularLocation>
    <subcellularLocation>
        <location evidence="1">Host apical cell membrane</location>
        <topology evidence="1">Single-pass type II membrane protein</topology>
    </subcellularLocation>
    <text evidence="1">Preferentially accumulates at the apical plasma membrane in infected polarized epithelial cells, which is the virus assembly site. Uses lipid rafts for cell surface transport and apical sorting. In the virion, forms a mushroom-shaped spike on the surface of the membrane.</text>
</comment>
<comment type="domain">
    <text evidence="1">Intact N-terminus is essential for virion morphogenesis. Possesses two apical sorting signals, one in the ectodomain, which is likely to be a glycan, and the other in the transmembrane domain. The transmembrane domain also plays a role in lipid raft association.</text>
</comment>
<comment type="PTM">
    <text evidence="1">N-glycosylated.</text>
</comment>
<comment type="miscellaneous">
    <text>The influenza A genome consist of 8 RNA segments. Genetic variation of hemagglutinin and/or neuraminidase genes results in the emergence of new influenza strains. The mechanism of variation can be the result of point mutations or the result of genetic reassortment between segments of two different strains.</text>
</comment>
<comment type="miscellaneous">
    <text>Strain A/Udorn/307/72 is a laboratory-adapted strain.</text>
</comment>
<comment type="similarity">
    <text evidence="1">Belongs to the glycosyl hydrolase 34 family.</text>
</comment>
<accession>P0DOF6</accession>
<accession>P03483</accession>
<accession>Q1K9D9</accession>
<proteinExistence type="inferred from homology"/>